<accession>Q44601</accession>
<evidence type="ECO:0000255" key="1"/>
<evidence type="ECO:0000305" key="2"/>
<proteinExistence type="inferred from homology"/>
<organism>
    <name type="scientific">Buchnera aphidicola subsp. Schlechtendalia chinensis</name>
    <dbReference type="NCBI Taxonomy" id="118110"/>
    <lineage>
        <taxon>Bacteria</taxon>
        <taxon>Pseudomonadati</taxon>
        <taxon>Pseudomonadota</taxon>
        <taxon>Gammaproteobacteria</taxon>
        <taxon>Enterobacterales</taxon>
        <taxon>Erwiniaceae</taxon>
        <taxon>Buchnera</taxon>
    </lineage>
</organism>
<protein>
    <recommendedName>
        <fullName>Uncharacterized transporter in trpA 3'region</fullName>
    </recommendedName>
</protein>
<comment type="subcellular location">
    <subcellularLocation>
        <location evidence="2">Cell membrane</location>
        <topology evidence="2">Multi-pass membrane protein</topology>
    </subcellularLocation>
</comment>
<comment type="similarity">
    <text evidence="2">Belongs to the EamA transporter family.</text>
</comment>
<sequence length="304" mass="35052">MIRKTIILLLFIIVSITWGTTFIAIRIASDTIPPLCITGMRFLLASFFLIFLCFYTKTPLLFPSNKKIFQLIICIFYFSLPFLLILYGGRYVNSTIASVIFAIMPIIVLFLSFIFFNKKLYFFQFIGLVLAIIFLSIILFKEIELGDEKTIKGVIALLLAMTSHAIIYLYSKEKYSNISILTFNALPSLLSGLFFLVISNILEHPKFDNFSNISILATFYLSYFSGVFGILSYFYLQKKVSAFQASTIFFIFPIINLMLEEFVWGNSIGIDQLQLIVFLMSSILITIFPFDLKNFMRFIKNFKK</sequence>
<dbReference type="EMBL" id="U09185">
    <property type="protein sequence ID" value="AAA92793.1"/>
    <property type="molecule type" value="Genomic_DNA"/>
</dbReference>
<dbReference type="SMR" id="Q44601"/>
<dbReference type="STRING" id="118110.XW81_01320"/>
<dbReference type="GO" id="GO:0005886">
    <property type="term" value="C:plasma membrane"/>
    <property type="evidence" value="ECO:0007669"/>
    <property type="project" value="UniProtKB-SubCell"/>
</dbReference>
<dbReference type="InterPro" id="IPR050638">
    <property type="entry name" value="AA-Vitamin_Transporters"/>
</dbReference>
<dbReference type="InterPro" id="IPR000620">
    <property type="entry name" value="EamA_dom"/>
</dbReference>
<dbReference type="PANTHER" id="PTHR32322">
    <property type="entry name" value="INNER MEMBRANE TRANSPORTER"/>
    <property type="match status" value="1"/>
</dbReference>
<dbReference type="PANTHER" id="PTHR32322:SF14">
    <property type="entry name" value="PROTEIN PAGO"/>
    <property type="match status" value="1"/>
</dbReference>
<dbReference type="Pfam" id="PF00892">
    <property type="entry name" value="EamA"/>
    <property type="match status" value="2"/>
</dbReference>
<dbReference type="SUPFAM" id="SSF103481">
    <property type="entry name" value="Multidrug resistance efflux transporter EmrE"/>
    <property type="match status" value="2"/>
</dbReference>
<keyword id="KW-1003">Cell membrane</keyword>
<keyword id="KW-0472">Membrane</keyword>
<keyword id="KW-0677">Repeat</keyword>
<keyword id="KW-0812">Transmembrane</keyword>
<keyword id="KW-1133">Transmembrane helix</keyword>
<keyword id="KW-0813">Transport</keyword>
<reference key="1">
    <citation type="journal article" date="1995" name="Insect Mol. Biol.">
        <title>Genetics of the tryptophan biosynthetic pathway of the prokaryotic endosymbiont (Buchnera) of the aphid Schlechtendalia chinensis.</title>
        <authorList>
            <person name="Lai C.-Y."/>
            <person name="Baumann P."/>
            <person name="Moran N.A."/>
        </authorList>
    </citation>
    <scope>NUCLEOTIDE SEQUENCE [GENOMIC DNA]</scope>
</reference>
<feature type="chain" id="PRO_0000108190" description="Uncharacterized transporter in trpA 3'region">
    <location>
        <begin position="1"/>
        <end position="304"/>
    </location>
</feature>
<feature type="transmembrane region" description="Helical" evidence="1">
    <location>
        <begin position="5"/>
        <end position="25"/>
    </location>
</feature>
<feature type="transmembrane region" description="Helical" evidence="1">
    <location>
        <begin position="42"/>
        <end position="62"/>
    </location>
</feature>
<feature type="transmembrane region" description="Helical" evidence="1">
    <location>
        <begin position="68"/>
        <end position="88"/>
    </location>
</feature>
<feature type="transmembrane region" description="Helical" evidence="1">
    <location>
        <begin position="96"/>
        <end position="116"/>
    </location>
</feature>
<feature type="transmembrane region" description="Helical" evidence="1">
    <location>
        <begin position="120"/>
        <end position="140"/>
    </location>
</feature>
<feature type="transmembrane region" description="Helical" evidence="1">
    <location>
        <begin position="150"/>
        <end position="170"/>
    </location>
</feature>
<feature type="transmembrane region" description="Helical" evidence="1">
    <location>
        <begin position="178"/>
        <end position="198"/>
    </location>
</feature>
<feature type="transmembrane region" description="Helical" evidence="1">
    <location>
        <begin position="215"/>
        <end position="235"/>
    </location>
</feature>
<feature type="transmembrane region" description="Helical" evidence="1">
    <location>
        <begin position="245"/>
        <end position="265"/>
    </location>
</feature>
<feature type="transmembrane region" description="Helical" evidence="1">
    <location>
        <begin position="268"/>
        <end position="288"/>
    </location>
</feature>
<feature type="domain" description="EamA 1">
    <location>
        <begin position="16"/>
        <end position="140"/>
    </location>
</feature>
<feature type="domain" description="EamA 2">
    <location>
        <begin position="162"/>
        <end position="288"/>
    </location>
</feature>
<name>YTR1_BUCSC</name>